<gene>
    <name evidence="2" type="primary">glnS</name>
    <name type="ordered locus">c0766</name>
</gene>
<sequence>MSEAEARPTNFIRQIIDEDLASGKHTTVHTRFPPEPNGYLHIGHAKSICLNFGIAQDYKGQCNLRFDDTNPVKEDIEYVDSIKNDVEWLGFHWSGNVRYSSDYFDQLHAYAIELINKGLAYVDELTPEQIREYRGTLTQPGKNSPYRDRSVEENLALFEKMRTGGFEEGKACLRAKIDMASPFIVMRDPVLYRIKFAEHHQTGNKWCIYPMYDFTHCISDALEGITHSLCTLEFQDNRRLYDWVLDNITIPVHPRQYEFSRLNLEYTVMSKRKLNLLVTDKHVEGWDDPRMPTISGLRRRGYTAASIREFCKRIGVTKQDNTIEMASLESCIREDLNENAPRAMAVIDPVKLVIENYQGEGEMVTMPNHPNKPEMGSRQVPFSGEIWIDRADFREEANKQYKRLVLGKEVRLRNAYVIKAERVEKDAEGNITTIFCTYDADTLSKDPADGRKVKGVIHWVSAAHALPVEIRLYDRLFSVPNPGAADDFLSVINPESLVIKQGFAEPSLKDAVAGKAFQFEREGYFCLDSRHSTAEKPVFNRTVGLRDTWAKVGE</sequence>
<proteinExistence type="inferred from homology"/>
<keyword id="KW-0030">Aminoacyl-tRNA synthetase</keyword>
<keyword id="KW-0067">ATP-binding</keyword>
<keyword id="KW-0963">Cytoplasm</keyword>
<keyword id="KW-0436">Ligase</keyword>
<keyword id="KW-0547">Nucleotide-binding</keyword>
<keyword id="KW-0648">Protein biosynthesis</keyword>
<keyword id="KW-1185">Reference proteome</keyword>
<reference key="1">
    <citation type="journal article" date="2002" name="Proc. Natl. Acad. Sci. U.S.A.">
        <title>Extensive mosaic structure revealed by the complete genome sequence of uropathogenic Escherichia coli.</title>
        <authorList>
            <person name="Welch R.A."/>
            <person name="Burland V."/>
            <person name="Plunkett G. III"/>
            <person name="Redford P."/>
            <person name="Roesch P."/>
            <person name="Rasko D."/>
            <person name="Buckles E.L."/>
            <person name="Liou S.-R."/>
            <person name="Boutin A."/>
            <person name="Hackett J."/>
            <person name="Stroud D."/>
            <person name="Mayhew G.F."/>
            <person name="Rose D.J."/>
            <person name="Zhou S."/>
            <person name="Schwartz D.C."/>
            <person name="Perna N.T."/>
            <person name="Mobley H.L.T."/>
            <person name="Donnenberg M.S."/>
            <person name="Blattner F.R."/>
        </authorList>
    </citation>
    <scope>NUCLEOTIDE SEQUENCE [LARGE SCALE GENOMIC DNA]</scope>
    <source>
        <strain>CFT073 / ATCC 700928 / UPEC</strain>
    </source>
</reference>
<protein>
    <recommendedName>
        <fullName evidence="2">Glutamine--tRNA ligase</fullName>
        <ecNumber evidence="2">6.1.1.18</ecNumber>
    </recommendedName>
    <alternativeName>
        <fullName evidence="2">Glutaminyl-tRNA synthetase</fullName>
        <shortName evidence="2">GlnRS</shortName>
    </alternativeName>
</protein>
<feature type="initiator methionine" description="Removed" evidence="1">
    <location>
        <position position="1"/>
    </location>
</feature>
<feature type="chain" id="PRO_0000195834" description="Glutamine--tRNA ligase">
    <location>
        <begin position="2"/>
        <end position="554"/>
    </location>
</feature>
<feature type="region of interest" description="Interaction with tRNA" evidence="2">
    <location>
        <begin position="317"/>
        <end position="324"/>
    </location>
</feature>
<feature type="short sequence motif" description="'HIGH' region" evidence="2">
    <location>
        <begin position="34"/>
        <end position="44"/>
    </location>
</feature>
<feature type="short sequence motif" description="'KMSKS' region" evidence="2">
    <location>
        <begin position="268"/>
        <end position="272"/>
    </location>
</feature>
<feature type="binding site" evidence="2">
    <location>
        <begin position="35"/>
        <end position="37"/>
    </location>
    <ligand>
        <name>ATP</name>
        <dbReference type="ChEBI" id="CHEBI:30616"/>
    </ligand>
</feature>
<feature type="binding site" evidence="2">
    <location>
        <begin position="41"/>
        <end position="47"/>
    </location>
    <ligand>
        <name>ATP</name>
        <dbReference type="ChEBI" id="CHEBI:30616"/>
    </ligand>
</feature>
<feature type="binding site" evidence="2">
    <location>
        <position position="67"/>
    </location>
    <ligand>
        <name>L-glutamine</name>
        <dbReference type="ChEBI" id="CHEBI:58359"/>
    </ligand>
</feature>
<feature type="binding site" evidence="2">
    <location>
        <position position="212"/>
    </location>
    <ligand>
        <name>L-glutamine</name>
        <dbReference type="ChEBI" id="CHEBI:58359"/>
    </ligand>
</feature>
<feature type="binding site" evidence="2">
    <location>
        <position position="231"/>
    </location>
    <ligand>
        <name>ATP</name>
        <dbReference type="ChEBI" id="CHEBI:30616"/>
    </ligand>
</feature>
<feature type="binding site" evidence="2">
    <location>
        <begin position="261"/>
        <end position="262"/>
    </location>
    <ligand>
        <name>ATP</name>
        <dbReference type="ChEBI" id="CHEBI:30616"/>
    </ligand>
</feature>
<feature type="binding site" evidence="2">
    <location>
        <begin position="269"/>
        <end position="271"/>
    </location>
    <ligand>
        <name>ATP</name>
        <dbReference type="ChEBI" id="CHEBI:30616"/>
    </ligand>
</feature>
<accession>Q8FJW4</accession>
<dbReference type="EC" id="6.1.1.18" evidence="2"/>
<dbReference type="EMBL" id="AE014075">
    <property type="protein sequence ID" value="AAN79239.1"/>
    <property type="molecule type" value="Genomic_DNA"/>
</dbReference>
<dbReference type="RefSeq" id="WP_001287134.1">
    <property type="nucleotide sequence ID" value="NZ_CP051263.1"/>
</dbReference>
<dbReference type="SMR" id="Q8FJW4"/>
<dbReference type="STRING" id="199310.c0766"/>
<dbReference type="KEGG" id="ecc:c0766"/>
<dbReference type="eggNOG" id="COG0008">
    <property type="taxonomic scope" value="Bacteria"/>
</dbReference>
<dbReference type="HOGENOM" id="CLU_001882_2_3_6"/>
<dbReference type="BioCyc" id="ECOL199310:C0766-MONOMER"/>
<dbReference type="Proteomes" id="UP000001410">
    <property type="component" value="Chromosome"/>
</dbReference>
<dbReference type="GO" id="GO:0005829">
    <property type="term" value="C:cytosol"/>
    <property type="evidence" value="ECO:0007669"/>
    <property type="project" value="TreeGrafter"/>
</dbReference>
<dbReference type="GO" id="GO:0005524">
    <property type="term" value="F:ATP binding"/>
    <property type="evidence" value="ECO:0007669"/>
    <property type="project" value="UniProtKB-UniRule"/>
</dbReference>
<dbReference type="GO" id="GO:0004819">
    <property type="term" value="F:glutamine-tRNA ligase activity"/>
    <property type="evidence" value="ECO:0007669"/>
    <property type="project" value="UniProtKB-UniRule"/>
</dbReference>
<dbReference type="GO" id="GO:0006425">
    <property type="term" value="P:glutaminyl-tRNA aminoacylation"/>
    <property type="evidence" value="ECO:0007669"/>
    <property type="project" value="InterPro"/>
</dbReference>
<dbReference type="GO" id="GO:0006424">
    <property type="term" value="P:glutamyl-tRNA aminoacylation"/>
    <property type="evidence" value="ECO:0007669"/>
    <property type="project" value="UniProtKB-UniRule"/>
</dbReference>
<dbReference type="CDD" id="cd00807">
    <property type="entry name" value="GlnRS_core"/>
    <property type="match status" value="1"/>
</dbReference>
<dbReference type="FunFam" id="1.10.1160.10:FF:000001">
    <property type="entry name" value="Glutamine--tRNA ligase"/>
    <property type="match status" value="1"/>
</dbReference>
<dbReference type="FunFam" id="2.40.240.10:FF:000001">
    <property type="entry name" value="Glutamine--tRNA ligase"/>
    <property type="match status" value="1"/>
</dbReference>
<dbReference type="FunFam" id="2.40.240.10:FF:000003">
    <property type="entry name" value="Glutamine--tRNA ligase"/>
    <property type="match status" value="1"/>
</dbReference>
<dbReference type="FunFam" id="3.90.800.10:FF:000001">
    <property type="entry name" value="Glutamine--tRNA ligase"/>
    <property type="match status" value="1"/>
</dbReference>
<dbReference type="FunFam" id="3.40.50.620:FF:000037">
    <property type="entry name" value="Glutamine--tRNA ligase cytoplasmic"/>
    <property type="match status" value="1"/>
</dbReference>
<dbReference type="Gene3D" id="1.10.1160.10">
    <property type="entry name" value="Glutamyl-trna Synthetase, Domain 2"/>
    <property type="match status" value="1"/>
</dbReference>
<dbReference type="Gene3D" id="3.90.800.10">
    <property type="entry name" value="Glutamyl-tRNA Synthetase, Domain 3"/>
    <property type="match status" value="1"/>
</dbReference>
<dbReference type="Gene3D" id="3.40.50.620">
    <property type="entry name" value="HUPs"/>
    <property type="match status" value="1"/>
</dbReference>
<dbReference type="Gene3D" id="2.40.240.10">
    <property type="entry name" value="Ribosomal Protein L25, Chain P"/>
    <property type="match status" value="2"/>
</dbReference>
<dbReference type="HAMAP" id="MF_00126">
    <property type="entry name" value="Gln_tRNA_synth"/>
    <property type="match status" value="1"/>
</dbReference>
<dbReference type="InterPro" id="IPR001412">
    <property type="entry name" value="aa-tRNA-synth_I_CS"/>
</dbReference>
<dbReference type="InterPro" id="IPR004514">
    <property type="entry name" value="Gln-tRNA-synth"/>
</dbReference>
<dbReference type="InterPro" id="IPR050132">
    <property type="entry name" value="Gln/Glu-tRNA_Ligase"/>
</dbReference>
<dbReference type="InterPro" id="IPR022861">
    <property type="entry name" value="Gln_tRNA_ligase_bac"/>
</dbReference>
<dbReference type="InterPro" id="IPR000924">
    <property type="entry name" value="Glu/Gln-tRNA-synth"/>
</dbReference>
<dbReference type="InterPro" id="IPR020058">
    <property type="entry name" value="Glu/Gln-tRNA-synth_Ib_cat-dom"/>
</dbReference>
<dbReference type="InterPro" id="IPR020059">
    <property type="entry name" value="Glu/Gln-tRNA-synth_Ib_codon-bd"/>
</dbReference>
<dbReference type="InterPro" id="IPR020061">
    <property type="entry name" value="Glu_tRNA_lig_a-bdl"/>
</dbReference>
<dbReference type="InterPro" id="IPR020056">
    <property type="entry name" value="Rbsml_bL25/Gln-tRNA_synth_N"/>
</dbReference>
<dbReference type="InterPro" id="IPR011035">
    <property type="entry name" value="Ribosomal_bL25/Gln-tRNA_synth"/>
</dbReference>
<dbReference type="InterPro" id="IPR014729">
    <property type="entry name" value="Rossmann-like_a/b/a_fold"/>
</dbReference>
<dbReference type="InterPro" id="IPR049437">
    <property type="entry name" value="tRNA-synt_1c_C2"/>
</dbReference>
<dbReference type="NCBIfam" id="TIGR00440">
    <property type="entry name" value="glnS"/>
    <property type="match status" value="1"/>
</dbReference>
<dbReference type="NCBIfam" id="NF011291">
    <property type="entry name" value="PRK14703.1"/>
    <property type="match status" value="1"/>
</dbReference>
<dbReference type="PANTHER" id="PTHR43097:SF5">
    <property type="entry name" value="GLUTAMATE--TRNA LIGASE"/>
    <property type="match status" value="1"/>
</dbReference>
<dbReference type="PANTHER" id="PTHR43097">
    <property type="entry name" value="GLUTAMINE-TRNA LIGASE"/>
    <property type="match status" value="1"/>
</dbReference>
<dbReference type="Pfam" id="PF00749">
    <property type="entry name" value="tRNA-synt_1c"/>
    <property type="match status" value="1"/>
</dbReference>
<dbReference type="Pfam" id="PF03950">
    <property type="entry name" value="tRNA-synt_1c_C"/>
    <property type="match status" value="1"/>
</dbReference>
<dbReference type="Pfam" id="PF20974">
    <property type="entry name" value="tRNA-synt_1c_C2"/>
    <property type="match status" value="1"/>
</dbReference>
<dbReference type="PRINTS" id="PR00987">
    <property type="entry name" value="TRNASYNTHGLU"/>
</dbReference>
<dbReference type="SUPFAM" id="SSF52374">
    <property type="entry name" value="Nucleotidylyl transferase"/>
    <property type="match status" value="1"/>
</dbReference>
<dbReference type="SUPFAM" id="SSF50715">
    <property type="entry name" value="Ribosomal protein L25-like"/>
    <property type="match status" value="1"/>
</dbReference>
<dbReference type="PROSITE" id="PS00178">
    <property type="entry name" value="AA_TRNA_LIGASE_I"/>
    <property type="match status" value="1"/>
</dbReference>
<comment type="catalytic activity">
    <reaction evidence="2">
        <text>tRNA(Gln) + L-glutamine + ATP = L-glutaminyl-tRNA(Gln) + AMP + diphosphate</text>
        <dbReference type="Rhea" id="RHEA:20121"/>
        <dbReference type="Rhea" id="RHEA-COMP:9662"/>
        <dbReference type="Rhea" id="RHEA-COMP:9681"/>
        <dbReference type="ChEBI" id="CHEBI:30616"/>
        <dbReference type="ChEBI" id="CHEBI:33019"/>
        <dbReference type="ChEBI" id="CHEBI:58359"/>
        <dbReference type="ChEBI" id="CHEBI:78442"/>
        <dbReference type="ChEBI" id="CHEBI:78521"/>
        <dbReference type="ChEBI" id="CHEBI:456215"/>
        <dbReference type="EC" id="6.1.1.18"/>
    </reaction>
</comment>
<comment type="subunit">
    <text evidence="2">Monomer.</text>
</comment>
<comment type="subcellular location">
    <subcellularLocation>
        <location evidence="2">Cytoplasm</location>
    </subcellularLocation>
</comment>
<comment type="similarity">
    <text evidence="2">Belongs to the class-I aminoacyl-tRNA synthetase family.</text>
</comment>
<organism>
    <name type="scientific">Escherichia coli O6:H1 (strain CFT073 / ATCC 700928 / UPEC)</name>
    <dbReference type="NCBI Taxonomy" id="199310"/>
    <lineage>
        <taxon>Bacteria</taxon>
        <taxon>Pseudomonadati</taxon>
        <taxon>Pseudomonadota</taxon>
        <taxon>Gammaproteobacteria</taxon>
        <taxon>Enterobacterales</taxon>
        <taxon>Enterobacteriaceae</taxon>
        <taxon>Escherichia</taxon>
    </lineage>
</organism>
<evidence type="ECO:0000250" key="1"/>
<evidence type="ECO:0000255" key="2">
    <source>
        <dbReference type="HAMAP-Rule" id="MF_00126"/>
    </source>
</evidence>
<name>SYQ_ECOL6</name>